<sequence length="126" mass="13906">MPEPAKSAPAPKKGSKKAVTKAQKKDGKKRKRSRKESYSVYVYKVLKQVHPDTGISSKAMGIMNSFVNDIFERIAGEASRLAHYNKRSTITSREIQTAVRLLLPGELAKHAVSEGTKAVTKYTSSK</sequence>
<name>H2B1C_MOUSE</name>
<feature type="initiator methionine" description="Removed" evidence="1">
    <location>
        <position position="1"/>
    </location>
</feature>
<feature type="chain" id="PRO_0000244831" description="Histone H2B type 1-C/E/G">
    <location>
        <begin position="2"/>
        <end position="126"/>
    </location>
</feature>
<feature type="region of interest" description="Disordered" evidence="8">
    <location>
        <begin position="1"/>
        <end position="36"/>
    </location>
</feature>
<feature type="compositionally biased region" description="Low complexity" evidence="8">
    <location>
        <begin position="1"/>
        <end position="12"/>
    </location>
</feature>
<feature type="modified residue" description="N-acetylproline" evidence="1">
    <location>
        <position position="2"/>
    </location>
</feature>
<feature type="modified residue" description="ADP-ribosyl glutamic acid" evidence="2">
    <location>
        <position position="3"/>
    </location>
</feature>
<feature type="modified residue" description="N6-(2-hydroxyisobutyryl)lysine; alternate" evidence="14">
    <location>
        <position position="6"/>
    </location>
</feature>
<feature type="modified residue" description="N6-(beta-hydroxybutyryl)lysine; alternate" evidence="15">
    <location>
        <position position="6"/>
    </location>
</feature>
<feature type="modified residue" description="N6-acetyllysine; alternate" evidence="4">
    <location>
        <position position="6"/>
    </location>
</feature>
<feature type="modified residue" description="N6-butyryllysine; alternate" evidence="2">
    <location>
        <position position="6"/>
    </location>
</feature>
<feature type="modified residue" description="N6-crotonyllysine; alternate" evidence="12">
    <location>
        <position position="6"/>
    </location>
</feature>
<feature type="modified residue" description="N6-lactoyllysine; alternate" evidence="16">
    <location>
        <position position="6"/>
    </location>
</feature>
<feature type="modified residue" description="ADP-ribosylserine" evidence="2">
    <location>
        <position position="7"/>
    </location>
</feature>
<feature type="modified residue" description="N6-(beta-hydroxybutyryl)lysine; alternate" evidence="15">
    <location>
        <position position="12"/>
    </location>
</feature>
<feature type="modified residue" description="N6-acetyllysine; alternate" evidence="4">
    <location>
        <position position="12"/>
    </location>
</feature>
<feature type="modified residue" description="N6-crotonyllysine; alternate" evidence="12">
    <location>
        <position position="12"/>
    </location>
</feature>
<feature type="modified residue" description="N6-lactoyllysine; alternate" evidence="16">
    <location>
        <position position="12"/>
    </location>
</feature>
<feature type="modified residue" description="N6-(2-hydroxyisobutyryl)lysine; alternate" evidence="14">
    <location>
        <position position="13"/>
    </location>
</feature>
<feature type="modified residue" description="N6-acetyllysine; alternate" evidence="4">
    <location>
        <position position="13"/>
    </location>
</feature>
<feature type="modified residue" description="N6-crotonyllysine; alternate" evidence="12">
    <location>
        <position position="13"/>
    </location>
</feature>
<feature type="modified residue" description="Phosphoserine; by STK4/MST1" evidence="9 10">
    <location>
        <position position="15"/>
    </location>
</feature>
<feature type="modified residue" description="N6-acetyllysine; alternate" evidence="4">
    <location>
        <position position="16"/>
    </location>
</feature>
<feature type="modified residue" description="N6-crotonyllysine; alternate" evidence="12">
    <location>
        <position position="16"/>
    </location>
</feature>
<feature type="modified residue" description="N6-lactoyllysine; alternate" evidence="16">
    <location>
        <position position="16"/>
    </location>
</feature>
<feature type="modified residue" description="N6-acetyllysine; alternate" evidence="4">
    <location>
        <position position="17"/>
    </location>
</feature>
<feature type="modified residue" description="N6-crotonyllysine; alternate" evidence="12">
    <location>
        <position position="17"/>
    </location>
</feature>
<feature type="modified residue" description="N6-glutaryllysine; alternate" evidence="2">
    <location>
        <position position="17"/>
    </location>
</feature>
<feature type="modified residue" description="N6-lactoyllysine; alternate" evidence="16">
    <location>
        <position position="17"/>
    </location>
</feature>
<feature type="modified residue" description="N6-(2-hydroxyisobutyryl)lysine; alternate" evidence="14">
    <location>
        <position position="21"/>
    </location>
</feature>
<feature type="modified residue" description="N6-(beta-hydroxybutyryl)lysine; alternate" evidence="15">
    <location>
        <position position="21"/>
    </location>
</feature>
<feature type="modified residue" description="N6-acetyllysine; alternate" evidence="4">
    <location>
        <position position="21"/>
    </location>
</feature>
<feature type="modified residue" description="N6-butyryllysine; alternate" evidence="2">
    <location>
        <position position="21"/>
    </location>
</feature>
<feature type="modified residue" description="N6-crotonyllysine; alternate" evidence="12">
    <location>
        <position position="21"/>
    </location>
</feature>
<feature type="modified residue" description="N6-lactoyllysine; alternate" evidence="16">
    <location>
        <position position="21"/>
    </location>
</feature>
<feature type="modified residue" description="N6-(2-hydroxyisobutyryl)lysine; alternate" evidence="14">
    <location>
        <position position="24"/>
    </location>
</feature>
<feature type="modified residue" description="N6-acetyllysine; alternate" evidence="2">
    <location>
        <position position="24"/>
    </location>
</feature>
<feature type="modified residue" description="N6-crotonyllysine; alternate" evidence="12">
    <location>
        <position position="24"/>
    </location>
</feature>
<feature type="modified residue" description="N6-lactoyllysine; alternate" evidence="2">
    <location>
        <position position="24"/>
    </location>
</feature>
<feature type="modified residue" description="N6-(2-hydroxyisobutyryl)lysine" evidence="14">
    <location>
        <position position="25"/>
    </location>
</feature>
<feature type="modified residue" description="N6-(2-hydroxyisobutyryl)lysine; alternate" evidence="14">
    <location>
        <position position="35"/>
    </location>
</feature>
<feature type="modified residue" description="N6-(beta-hydroxybutyryl)lysine; alternate" evidence="15">
    <location>
        <position position="35"/>
    </location>
</feature>
<feature type="modified residue" description="N6-crotonyllysine; alternate" evidence="12">
    <location>
        <position position="35"/>
    </location>
</feature>
<feature type="modified residue" description="N6-glutaryllysine; alternate" evidence="2">
    <location>
        <position position="35"/>
    </location>
</feature>
<feature type="modified residue" description="N6-succinyllysine; alternate" evidence="4">
    <location>
        <position position="35"/>
    </location>
</feature>
<feature type="modified residue" description="PolyADP-ribosyl glutamic acid" evidence="17">
    <location>
        <position position="36"/>
    </location>
</feature>
<feature type="modified residue" description="Phosphoserine; by AMPK" evidence="11 17">
    <location>
        <position position="37"/>
    </location>
</feature>
<feature type="modified residue" description="N6-(2-hydroxyisobutyryl)lysine; alternate" evidence="14">
    <location>
        <position position="44"/>
    </location>
</feature>
<feature type="modified residue" description="N6-glutaryllysine; alternate" evidence="2">
    <location>
        <position position="44"/>
    </location>
</feature>
<feature type="modified residue" description="N6-lactoyllysine; alternate" evidence="2">
    <location>
        <position position="44"/>
    </location>
</feature>
<feature type="modified residue" description="N6-(2-hydroxyisobutyryl)lysine; alternate" evidence="14">
    <location>
        <position position="47"/>
    </location>
</feature>
<feature type="modified residue" description="N6-glutaryllysine; alternate" evidence="2">
    <location>
        <position position="47"/>
    </location>
</feature>
<feature type="modified residue" description="N6-methyllysine; alternate" evidence="4">
    <location>
        <position position="47"/>
    </location>
</feature>
<feature type="modified residue" description="N6,N6-dimethyllysine; alternate" evidence="4">
    <location>
        <position position="58"/>
    </location>
</feature>
<feature type="modified residue" description="N6-(2-hydroxyisobutyryl)lysine; alternate" evidence="14">
    <location>
        <position position="58"/>
    </location>
</feature>
<feature type="modified residue" description="Dimethylated arginine" evidence="7">
    <location>
        <position position="80"/>
    </location>
</feature>
<feature type="modified residue" description="N6,N6,N6-trimethyllysine; alternate" evidence="7">
    <location>
        <position position="86"/>
    </location>
</feature>
<feature type="modified residue" description="N6-(2-hydroxyisobutyryl)lysine; alternate" evidence="14">
    <location>
        <position position="86"/>
    </location>
</feature>
<feature type="modified residue" description="N6-acetyllysine; alternate" evidence="7">
    <location>
        <position position="86"/>
    </location>
</feature>
<feature type="modified residue" description="N6-lactoyllysine; alternate" evidence="16">
    <location>
        <position position="86"/>
    </location>
</feature>
<feature type="modified residue" description="Omega-N-methylarginine" evidence="7">
    <location>
        <position position="87"/>
    </location>
</feature>
<feature type="modified residue" description="Omega-N-methylarginine" evidence="7">
    <location>
        <position position="93"/>
    </location>
</feature>
<feature type="modified residue" description="N6-(2-hydroxyisobutyryl)lysine; alternate" evidence="14">
    <location>
        <position position="109"/>
    </location>
</feature>
<feature type="modified residue" description="N6-(beta-hydroxybutyryl)lysine; alternate" evidence="15">
    <location>
        <position position="109"/>
    </location>
</feature>
<feature type="modified residue" description="N6-glutaryllysine; alternate" evidence="2">
    <location>
        <position position="109"/>
    </location>
</feature>
<feature type="modified residue" description="N6-lactoyllysine; alternate" evidence="16">
    <location>
        <position position="109"/>
    </location>
</feature>
<feature type="modified residue" description="N6-methyllysine; alternate" evidence="4">
    <location>
        <position position="109"/>
    </location>
</feature>
<feature type="modified residue" description="Phosphothreonine" evidence="5">
    <location>
        <position position="116"/>
    </location>
</feature>
<feature type="modified residue" description="N6-(2-hydroxyisobutyryl)lysine; alternate" evidence="14">
    <location>
        <position position="117"/>
    </location>
</feature>
<feature type="modified residue" description="N6-(beta-hydroxybutyryl)lysine; alternate" evidence="15">
    <location>
        <position position="117"/>
    </location>
</feature>
<feature type="modified residue" description="N6-glutaryllysine; alternate" evidence="2">
    <location>
        <position position="117"/>
    </location>
</feature>
<feature type="modified residue" description="N6-lactoyllysine; alternate" evidence="16">
    <location>
        <position position="117"/>
    </location>
</feature>
<feature type="modified residue" description="N6-methylated lysine; alternate" evidence="5">
    <location>
        <position position="117"/>
    </location>
</feature>
<feature type="modified residue" description="N6-succinyllysine; alternate" evidence="4">
    <location>
        <position position="117"/>
    </location>
</feature>
<feature type="modified residue" description="N6-(2-hydroxyisobutyryl)lysine; alternate" evidence="14">
    <location>
        <position position="121"/>
    </location>
</feature>
<feature type="modified residue" description="N6-glutaryllysine; alternate" evidence="2">
    <location>
        <position position="121"/>
    </location>
</feature>
<feature type="modified residue" description="N6-lactoyllysine; alternate" evidence="2">
    <location>
        <position position="121"/>
    </location>
</feature>
<feature type="modified residue" description="N6-succinyllysine; alternate" evidence="13">
    <location>
        <position position="121"/>
    </location>
</feature>
<feature type="glycosylation site" description="O-linked (GlcNAc) serine" evidence="4">
    <location>
        <position position="113"/>
    </location>
</feature>
<feature type="cross-link" description="Glycyl lysine isopeptide (Lys-Gly) (interchain with G-Cter in SUMO2); alternate" evidence="3">
    <location>
        <position position="6"/>
    </location>
</feature>
<feature type="cross-link" description="Glycyl lysine isopeptide (Lys-Gly) (interchain with G-Cter in SUMO2); alternate" evidence="6">
    <location>
        <position position="21"/>
    </location>
</feature>
<feature type="cross-link" description="Glycyl lysine isopeptide (Lys-Gly) (interchain with G-Cter in ubiquitin); alternate" evidence="4">
    <location>
        <position position="35"/>
    </location>
</feature>
<feature type="cross-link" description="Glycyl lysine isopeptide (Lys-Gly) (interchain with G-Cter in ubiquitin); alternate" evidence="4">
    <location>
        <position position="121"/>
    </location>
</feature>
<feature type="helix" evidence="22">
    <location>
        <begin position="39"/>
        <end position="49"/>
    </location>
</feature>
<feature type="helix" evidence="22">
    <location>
        <begin position="57"/>
        <end position="84"/>
    </location>
</feature>
<feature type="strand" evidence="22">
    <location>
        <begin position="88"/>
        <end position="90"/>
    </location>
</feature>
<feature type="helix" evidence="22">
    <location>
        <begin position="92"/>
        <end position="102"/>
    </location>
</feature>
<feature type="helix" evidence="22">
    <location>
        <begin position="105"/>
        <end position="124"/>
    </location>
</feature>
<accession>Q6ZWY9</accession>
<keyword id="KW-0002">3D-structure</keyword>
<keyword id="KW-0007">Acetylation</keyword>
<keyword id="KW-0013">ADP-ribosylation</keyword>
<keyword id="KW-0158">Chromosome</keyword>
<keyword id="KW-0238">DNA-binding</keyword>
<keyword id="KW-0325">Glycoprotein</keyword>
<keyword id="KW-0379">Hydroxylation</keyword>
<keyword id="KW-1017">Isopeptide bond</keyword>
<keyword id="KW-0488">Methylation</keyword>
<keyword id="KW-0544">Nucleosome core</keyword>
<keyword id="KW-0539">Nucleus</keyword>
<keyword id="KW-0597">Phosphoprotein</keyword>
<keyword id="KW-1185">Reference proteome</keyword>
<keyword id="KW-0832">Ubl conjugation</keyword>
<comment type="function">
    <text>Core component of nucleosome. Nucleosomes wrap and compact DNA into chromatin, limiting DNA accessibility to the cellular machineries which require DNA as a template. Histones thereby play a central role in transcription regulation, DNA repair, DNA replication and chromosomal stability. DNA accessibility is regulated via a complex set of post-translational modifications of histones, also called histone code, and nucleosome remodeling.</text>
</comment>
<comment type="subunit">
    <text evidence="4">The nucleosome is a histone octamer containing two molecules each of H2A, H2B, H3 and H4 assembled in one H3-H4 heterotetramer and two H2A-H2B heterodimers. The octamer wraps approximately 147 bp of DNA. Interacts with VRK1; the interaction is mediated by the nucleosome acidic patch, a cluster of negatively charged residues of H2A and H2B forming a cleft within the nucleosome core (By similarity).</text>
</comment>
<comment type="subcellular location">
    <subcellularLocation>
        <location>Nucleus</location>
    </subcellularLocation>
    <subcellularLocation>
        <location>Chromosome</location>
    </subcellularLocation>
</comment>
<comment type="PTM">
    <text evidence="2">Monoubiquitination at Lys-35 (H2BK34Ub) by the MSL1/MSL2 dimer is required for histone H3 'Lys-4' (H3K4me) and 'Lys-79' (H3K79me) methylation and transcription activation at specific gene loci, such as HOXA9 and MEIS1 loci. Similarly, monoubiquitination at Lys-121 (H2BK120Ub) by the RNF20/40 complex gives a specific tag for epigenetic transcriptional activation and is also prerequisite for histone H3 'Lys-4' and 'Lys-79' methylation. It also functions cooperatively with the FACT dimer to stimulate elongation by RNA polymerase II. H2BK120Ub also acts as a regulator of mRNA splicing: deubiquitination by USP49 is required for efficient cotranscriptional splicing of a large set of exons (By similarity).</text>
</comment>
<comment type="PTM">
    <text evidence="9 10 11 17">Phosphorylated on Ser-15 (H2BS14ph) by STK4/MST1 during apoptosis; which facilitates apoptotic chromatin condensation (PubMed:15197225, PubMed:16039583). Also phosphorylated on Ser-15 in response to DNA double strand breaks (DSBs), and in correlation with somatic hypermutation and immunoglobulin class-switch recombination (PubMed:15197225). Phosphorylation at Ser-37 (H2BS36ph) by AMPK in response to stress promotes transcription (PubMed:20647423, PubMed:32822587).</text>
</comment>
<comment type="PTM">
    <text evidence="4">GlcNAcylation at Ser-113 promotes monoubiquitination of Lys-121. It fluctuates in response to extracellular glucose, and associates with transcribed genes (By similarity).</text>
</comment>
<comment type="PTM">
    <text evidence="2 17">ADP-ribosylated by PARP1 or PARP2 on Ser-7 (H2BS6ADPr) in response to DNA damage (By similarity). H2BS6ADPr promotes recruitment of CHD1L (By similarity). Mono-ADP-ribosylated on Glu-3 (H2BE2ADPr) by PARP3 in response to single-strand breaks (By similarity). Poly ADP-ribosylation on Glu-36 (H2BE35ADPr) by PARP1 regulates adipogenesis: it inhibits phosphorylation at Ser-37 (H2BS36ph), thereby blocking expression of pro-adipogenetic genes (PubMed:32822587).</text>
</comment>
<comment type="PTM">
    <text evidence="12">Crotonylation (Kcr) is specifically present in male germ cells and marks testis-specific genes in post-meiotic cells, including X-linked genes that escape sex chromosome inactivation in haploid cells. Crotonylation marks active promoters and enhancers and confers resistance to transcriptional repressors. It is also associated with post-meiotically activated genes on autosomes.</text>
</comment>
<comment type="PTM">
    <text evidence="15">Hydroxybutyrylation of histones is induced by starvation.</text>
</comment>
<comment type="PTM">
    <text evidence="2">Lactylated in macrophages by EP300/P300 by using lactoyl-CoA directly derived from endogenous or exogenous lactate, leading to stimulates gene transcription.</text>
</comment>
<comment type="similarity">
    <text evidence="18">Belongs to the histone H2B family.</text>
</comment>
<proteinExistence type="evidence at protein level"/>
<protein>
    <recommendedName>
        <fullName>Histone H2B type 1-C/E/G</fullName>
    </recommendedName>
</protein>
<organism>
    <name type="scientific">Mus musculus</name>
    <name type="common">Mouse</name>
    <dbReference type="NCBI Taxonomy" id="10090"/>
    <lineage>
        <taxon>Eukaryota</taxon>
        <taxon>Metazoa</taxon>
        <taxon>Chordata</taxon>
        <taxon>Craniata</taxon>
        <taxon>Vertebrata</taxon>
        <taxon>Euteleostomi</taxon>
        <taxon>Mammalia</taxon>
        <taxon>Eutheria</taxon>
        <taxon>Euarchontoglires</taxon>
        <taxon>Glires</taxon>
        <taxon>Rodentia</taxon>
        <taxon>Myomorpha</taxon>
        <taxon>Muroidea</taxon>
        <taxon>Muridae</taxon>
        <taxon>Murinae</taxon>
        <taxon>Mus</taxon>
        <taxon>Mus</taxon>
    </lineage>
</organism>
<dbReference type="EMBL" id="AY158934">
    <property type="protein sequence ID" value="AAO06244.1"/>
    <property type="molecule type" value="Genomic_DNA"/>
</dbReference>
<dbReference type="EMBL" id="AY158936">
    <property type="protein sequence ID" value="AAO06246.1"/>
    <property type="molecule type" value="Genomic_DNA"/>
</dbReference>
<dbReference type="EMBL" id="AY158937">
    <property type="protein sequence ID" value="AAO06247.1"/>
    <property type="molecule type" value="Genomic_DNA"/>
</dbReference>
<dbReference type="EMBL" id="AK005407">
    <property type="protein sequence ID" value="BAB24007.1"/>
    <property type="molecule type" value="mRNA"/>
</dbReference>
<dbReference type="EMBL" id="AK011516">
    <property type="protein sequence ID" value="BAB27670.1"/>
    <property type="molecule type" value="mRNA"/>
</dbReference>
<dbReference type="EMBL" id="AK030546">
    <property type="protein sequence ID" value="BAC27014.1"/>
    <property type="molecule type" value="mRNA"/>
</dbReference>
<dbReference type="EMBL" id="AK049948">
    <property type="protein sequence ID" value="BAC34000.1"/>
    <property type="molecule type" value="mRNA"/>
</dbReference>
<dbReference type="EMBL" id="AL592149">
    <property type="protein sequence ID" value="CAI24894.1"/>
    <property type="molecule type" value="Genomic_DNA"/>
</dbReference>
<dbReference type="EMBL" id="BC019673">
    <property type="protein sequence ID" value="AAH19673.1"/>
    <property type="molecule type" value="mRNA"/>
</dbReference>
<dbReference type="EMBL" id="BC060304">
    <property type="protein sequence ID" value="AAH60304.1"/>
    <property type="molecule type" value="mRNA"/>
</dbReference>
<dbReference type="EMBL" id="BC069889">
    <property type="protein sequence ID" value="AAH69889.1"/>
    <property type="molecule type" value="mRNA"/>
</dbReference>
<dbReference type="CCDS" id="CCDS26349.1"/>
<dbReference type="CCDS" id="CCDS26354.1"/>
<dbReference type="CCDS" id="CCDS26357.1"/>
<dbReference type="RefSeq" id="NP_001171124.1">
    <property type="nucleotide sequence ID" value="NM_001177653.1"/>
</dbReference>
<dbReference type="RefSeq" id="NP_001277309.1">
    <property type="nucleotide sequence ID" value="NM_001290380.1"/>
</dbReference>
<dbReference type="RefSeq" id="NP_001277459.1">
    <property type="nucleotide sequence ID" value="NM_001290530.1"/>
</dbReference>
<dbReference type="RefSeq" id="NP_075911.2">
    <property type="nucleotide sequence ID" value="NM_023422.3"/>
</dbReference>
<dbReference type="RefSeq" id="NP_835501.1">
    <property type="nucleotide sequence ID" value="NM_178194.4"/>
</dbReference>
<dbReference type="RefSeq" id="NP_835503.1">
    <property type="nucleotide sequence ID" value="NM_178196.4"/>
</dbReference>
<dbReference type="PDB" id="8PKI">
    <property type="method" value="EM"/>
    <property type="resolution" value="2.58 A"/>
    <property type="chains" value="D/H=1-126"/>
</dbReference>
<dbReference type="PDB" id="8PKJ">
    <property type="method" value="EM"/>
    <property type="resolution" value="2.50 A"/>
    <property type="chains" value="D/H=1-126"/>
</dbReference>
<dbReference type="PDBsum" id="8PKI"/>
<dbReference type="PDBsum" id="8PKJ"/>
<dbReference type="EMDB" id="EMD-17740"/>
<dbReference type="SMR" id="Q6ZWY9"/>
<dbReference type="BioGRID" id="212605">
    <property type="interactions" value="4"/>
</dbReference>
<dbReference type="BioGRID" id="235098">
    <property type="interactions" value="2"/>
</dbReference>
<dbReference type="BioGRID" id="235100">
    <property type="interactions" value="3"/>
</dbReference>
<dbReference type="FunCoup" id="Q6ZWY9">
    <property type="interactions" value="2101"/>
</dbReference>
<dbReference type="STRING" id="10090.ENSMUSP00000018246"/>
<dbReference type="GlyCosmos" id="Q6ZWY9">
    <property type="glycosylation" value="1 site, No reported glycans"/>
</dbReference>
<dbReference type="GlyGen" id="Q6ZWY9">
    <property type="glycosylation" value="2 sites, 1 O-linked glycan (1 site)"/>
</dbReference>
<dbReference type="iPTMnet" id="Q6ZWY9"/>
<dbReference type="PhosphoSitePlus" id="Q6ZWY9"/>
<dbReference type="SwissPalm" id="Q6ZWY9"/>
<dbReference type="jPOST" id="Q6ZWY9"/>
<dbReference type="PaxDb" id="10090-ENSMUSP00000018246"/>
<dbReference type="PeptideAtlas" id="Q6ZWY9"/>
<dbReference type="Pumba" id="Q6ZWY9"/>
<dbReference type="TopDownProteomics" id="Q6ZWY9"/>
<dbReference type="Antibodypedia" id="77815">
    <property type="antibodies" value="2 antibodies from 1 providers"/>
</dbReference>
<dbReference type="DNASU" id="319179"/>
<dbReference type="DNASU" id="319181"/>
<dbReference type="DNASU" id="68024"/>
<dbReference type="Ensembl" id="ENSMUST00000018246.6">
    <property type="protein sequence ID" value="ENSMUSP00000018246.5"/>
    <property type="gene ID" value="ENSMUSG00000018102.6"/>
</dbReference>
<dbReference type="Ensembl" id="ENSMUST00000051091.5">
    <property type="protein sequence ID" value="ENSMUSP00000061247.4"/>
    <property type="gene ID" value="ENSMUSG00000047246.8"/>
</dbReference>
<dbReference type="Ensembl" id="ENSMUST00000079251.8">
    <property type="protein sequence ID" value="ENSMUSP00000078239.6"/>
    <property type="gene ID" value="ENSMUSG00000058385.9"/>
</dbReference>
<dbReference type="Ensembl" id="ENSMUST00000091704.7">
    <property type="protein sequence ID" value="ENSMUSP00000089296.6"/>
    <property type="gene ID" value="ENSMUSG00000047246.8"/>
</dbReference>
<dbReference type="GeneID" id="319179"/>
<dbReference type="GeneID" id="319181"/>
<dbReference type="GeneID" id="68024"/>
<dbReference type="KEGG" id="mmu:319179"/>
<dbReference type="KEGG" id="mmu:319181"/>
<dbReference type="KEGG" id="mmu:68024"/>
<dbReference type="UCSC" id="uc007pue.3">
    <property type="organism name" value="mouse"/>
</dbReference>
<dbReference type="CTD" id="8339"/>
<dbReference type="CTD" id="8344"/>
<dbReference type="CTD" id="8347"/>
<dbReference type="MGI" id="MGI:1915274">
    <property type="gene designation" value="H2bc4"/>
</dbReference>
<dbReference type="MGI" id="MGI:2448380">
    <property type="gene designation" value="H2bc6"/>
</dbReference>
<dbReference type="MGI" id="MGI:2448386">
    <property type="gene designation" value="H2bc8"/>
</dbReference>
<dbReference type="VEuPathDB" id="HostDB:ENSMUSG00000018102"/>
<dbReference type="VEuPathDB" id="HostDB:ENSMUSG00000047246"/>
<dbReference type="VEuPathDB" id="HostDB:ENSMUSG00000058385"/>
<dbReference type="eggNOG" id="KOG1744">
    <property type="taxonomic scope" value="Eukaryota"/>
</dbReference>
<dbReference type="GeneTree" id="ENSGT01110000267152"/>
<dbReference type="HOGENOM" id="CLU_075666_2_1_1"/>
<dbReference type="InParanoid" id="Q6ZWY9"/>
<dbReference type="OMA" id="SEVEYMG"/>
<dbReference type="OrthoDB" id="9620091at2759"/>
<dbReference type="PhylomeDB" id="Q6ZWY9"/>
<dbReference type="TreeFam" id="TF300212"/>
<dbReference type="Reactome" id="R-MMU-110330">
    <property type="pathway name" value="Recognition and association of DNA glycosylase with site containing an affected purine"/>
</dbReference>
<dbReference type="Reactome" id="R-MMU-110331">
    <property type="pathway name" value="Cleavage of the damaged purine"/>
</dbReference>
<dbReference type="Reactome" id="R-MMU-212300">
    <property type="pathway name" value="PRC2 methylates histones and DNA"/>
</dbReference>
<dbReference type="Reactome" id="R-MMU-2299718">
    <property type="pathway name" value="Condensation of Prophase Chromosomes"/>
</dbReference>
<dbReference type="Reactome" id="R-MMU-2559586">
    <property type="pathway name" value="DNA Damage/Telomere Stress Induced Senescence"/>
</dbReference>
<dbReference type="Reactome" id="R-MMU-3214815">
    <property type="pathway name" value="HDACs deacetylate histones"/>
</dbReference>
<dbReference type="Reactome" id="R-MMU-3214847">
    <property type="pathway name" value="HATs acetylate histones"/>
</dbReference>
<dbReference type="Reactome" id="R-MMU-5693565">
    <property type="pathway name" value="Recruitment and ATM-mediated phosphorylation of repair and signaling proteins at DNA double strand breaks"/>
</dbReference>
<dbReference type="Reactome" id="R-MMU-5693571">
    <property type="pathway name" value="Nonhomologous End-Joining (NHEJ)"/>
</dbReference>
<dbReference type="Reactome" id="R-MMU-5693607">
    <property type="pathway name" value="Processing of DNA double-strand break ends"/>
</dbReference>
<dbReference type="Reactome" id="R-MMU-606279">
    <property type="pathway name" value="Deposition of new CENPA-containing nucleosomes at the centromere"/>
</dbReference>
<dbReference type="Reactome" id="R-MMU-69473">
    <property type="pathway name" value="G2/M DNA damage checkpoint"/>
</dbReference>
<dbReference type="Reactome" id="R-MMU-8866654">
    <property type="pathway name" value="E3 ubiquitin ligases ubiquitinate target proteins"/>
</dbReference>
<dbReference type="Reactome" id="R-MMU-8936459">
    <property type="pathway name" value="RUNX1 regulates genes involved in megakaryocyte differentiation and platelet function"/>
</dbReference>
<dbReference type="Reactome" id="R-MMU-9018519">
    <property type="pathway name" value="Estrogen-dependent gene expression"/>
</dbReference>
<dbReference type="Reactome" id="R-MMU-9670095">
    <property type="pathway name" value="Inhibition of DNA recombination at telomere"/>
</dbReference>
<dbReference type="Reactome" id="R-MMU-9841922">
    <property type="pathway name" value="MLL4 and MLL3 complexes regulate expression of PPARG target genes in adipogenesis and hepatic steatosis"/>
</dbReference>
<dbReference type="Reactome" id="R-MMU-9843940">
    <property type="pathway name" value="Regulation of endogenous retroelements by KRAB-ZFP proteins"/>
</dbReference>
<dbReference type="BioGRID-ORCS" id="319179">
    <property type="hits" value="6 hits in 26 CRISPR screens"/>
</dbReference>
<dbReference type="BioGRID-ORCS" id="319181">
    <property type="hits" value="8 hits in 33 CRISPR screens"/>
</dbReference>
<dbReference type="BioGRID-ORCS" id="68024">
    <property type="hits" value="5 hits in 36 CRISPR screens"/>
</dbReference>
<dbReference type="ChiTaRS" id="Hist1h2bc">
    <property type="organism name" value="mouse"/>
</dbReference>
<dbReference type="ChiTaRS" id="Hist1h2be">
    <property type="organism name" value="mouse"/>
</dbReference>
<dbReference type="PRO" id="PR:Q6ZWY9"/>
<dbReference type="Proteomes" id="UP000000589">
    <property type="component" value="Chromosome 13"/>
</dbReference>
<dbReference type="RNAct" id="Q6ZWY9">
    <property type="molecule type" value="protein"/>
</dbReference>
<dbReference type="Bgee" id="ENSMUSG00000018102">
    <property type="expression patterns" value="Expressed in gonadal fat pad and 274 other cell types or tissues"/>
</dbReference>
<dbReference type="GO" id="GO:0005654">
    <property type="term" value="C:nucleoplasm"/>
    <property type="evidence" value="ECO:0000304"/>
    <property type="project" value="Reactome"/>
</dbReference>
<dbReference type="GO" id="GO:0000786">
    <property type="term" value="C:nucleosome"/>
    <property type="evidence" value="ECO:0007669"/>
    <property type="project" value="UniProtKB-KW"/>
</dbReference>
<dbReference type="GO" id="GO:0003677">
    <property type="term" value="F:DNA binding"/>
    <property type="evidence" value="ECO:0007669"/>
    <property type="project" value="UniProtKB-KW"/>
</dbReference>
<dbReference type="GO" id="GO:0046982">
    <property type="term" value="F:protein heterodimerization activity"/>
    <property type="evidence" value="ECO:0007669"/>
    <property type="project" value="InterPro"/>
</dbReference>
<dbReference type="GO" id="GO:0030527">
    <property type="term" value="F:structural constituent of chromatin"/>
    <property type="evidence" value="ECO:0007669"/>
    <property type="project" value="InterPro"/>
</dbReference>
<dbReference type="CDD" id="cd22910">
    <property type="entry name" value="HFD_H2B"/>
    <property type="match status" value="1"/>
</dbReference>
<dbReference type="FunFam" id="1.10.20.10:FF:000003">
    <property type="entry name" value="Histone H2B"/>
    <property type="match status" value="1"/>
</dbReference>
<dbReference type="Gene3D" id="1.10.20.10">
    <property type="entry name" value="Histone, subunit A"/>
    <property type="match status" value="1"/>
</dbReference>
<dbReference type="InterPro" id="IPR009072">
    <property type="entry name" value="Histone-fold"/>
</dbReference>
<dbReference type="InterPro" id="IPR007125">
    <property type="entry name" value="Histone_H2A/H2B/H3"/>
</dbReference>
<dbReference type="InterPro" id="IPR000558">
    <property type="entry name" value="Histone_H2B"/>
</dbReference>
<dbReference type="InterPro" id="IPR055333">
    <property type="entry name" value="HISTONE_H2B_site"/>
</dbReference>
<dbReference type="PANTHER" id="PTHR23428">
    <property type="entry name" value="HISTONE H2B"/>
    <property type="match status" value="1"/>
</dbReference>
<dbReference type="Pfam" id="PF00125">
    <property type="entry name" value="Histone"/>
    <property type="match status" value="1"/>
</dbReference>
<dbReference type="PRINTS" id="PR00621">
    <property type="entry name" value="HISTONEH2B"/>
</dbReference>
<dbReference type="SMART" id="SM00427">
    <property type="entry name" value="H2B"/>
    <property type="match status" value="1"/>
</dbReference>
<dbReference type="SUPFAM" id="SSF47113">
    <property type="entry name" value="Histone-fold"/>
    <property type="match status" value="1"/>
</dbReference>
<dbReference type="PROSITE" id="PS00357">
    <property type="entry name" value="HISTONE_H2B"/>
    <property type="match status" value="1"/>
</dbReference>
<gene>
    <name evidence="19" type="primary">H2bc4</name>
    <name type="synonym">Hist1h2bc</name>
</gene>
<gene>
    <name evidence="20" type="primary">H2bc6</name>
    <name type="synonym">Hist1h2be</name>
</gene>
<gene>
    <name evidence="21" type="primary">H2bc8</name>
    <name type="synonym">Hist1h2bg</name>
</gene>
<evidence type="ECO:0000250" key="1">
    <source>
        <dbReference type="UniProtKB" id="P23527"/>
    </source>
</evidence>
<evidence type="ECO:0000250" key="2">
    <source>
        <dbReference type="UniProtKB" id="P33778"/>
    </source>
</evidence>
<evidence type="ECO:0000250" key="3">
    <source>
        <dbReference type="UniProtKB" id="P58876"/>
    </source>
</evidence>
<evidence type="ECO:0000250" key="4">
    <source>
        <dbReference type="UniProtKB" id="P62807"/>
    </source>
</evidence>
<evidence type="ECO:0000250" key="5">
    <source>
        <dbReference type="UniProtKB" id="Q00729"/>
    </source>
</evidence>
<evidence type="ECO:0000250" key="6">
    <source>
        <dbReference type="UniProtKB" id="Q5QNW6"/>
    </source>
</evidence>
<evidence type="ECO:0000250" key="7">
    <source>
        <dbReference type="UniProtKB" id="Q96A08"/>
    </source>
</evidence>
<evidence type="ECO:0000256" key="8">
    <source>
        <dbReference type="SAM" id="MobiDB-lite"/>
    </source>
</evidence>
<evidence type="ECO:0000269" key="9">
    <source>
    </source>
</evidence>
<evidence type="ECO:0000269" key="10">
    <source>
    </source>
</evidence>
<evidence type="ECO:0000269" key="11">
    <source>
    </source>
</evidence>
<evidence type="ECO:0000269" key="12">
    <source>
    </source>
</evidence>
<evidence type="ECO:0000269" key="13">
    <source>
    </source>
</evidence>
<evidence type="ECO:0000269" key="14">
    <source>
    </source>
</evidence>
<evidence type="ECO:0000269" key="15">
    <source>
    </source>
</evidence>
<evidence type="ECO:0000269" key="16">
    <source>
    </source>
</evidence>
<evidence type="ECO:0000269" key="17">
    <source>
    </source>
</evidence>
<evidence type="ECO:0000305" key="18"/>
<evidence type="ECO:0000312" key="19">
    <source>
        <dbReference type="MGI" id="MGI:1915274"/>
    </source>
</evidence>
<evidence type="ECO:0000312" key="20">
    <source>
        <dbReference type="MGI" id="MGI:2448380"/>
    </source>
</evidence>
<evidence type="ECO:0000312" key="21">
    <source>
        <dbReference type="MGI" id="MGI:2448386"/>
    </source>
</evidence>
<evidence type="ECO:0007829" key="22">
    <source>
        <dbReference type="PDB" id="8PKJ"/>
    </source>
</evidence>
<reference key="1">
    <citation type="journal article" date="2002" name="Genomics">
        <title>The human and mouse replication-dependent histone genes.</title>
        <authorList>
            <person name="Marzluff W.F."/>
            <person name="Gongidi P."/>
            <person name="Woods K.R."/>
            <person name="Jin J."/>
            <person name="Maltais L.J."/>
        </authorList>
    </citation>
    <scope>NUCLEOTIDE SEQUENCE [GENOMIC DNA] (H2BC4; H2BC6 AND H2BC8)</scope>
</reference>
<reference key="2">
    <citation type="journal article" date="2005" name="Science">
        <title>The transcriptional landscape of the mammalian genome.</title>
        <authorList>
            <person name="Carninci P."/>
            <person name="Kasukawa T."/>
            <person name="Katayama S."/>
            <person name="Gough J."/>
            <person name="Frith M.C."/>
            <person name="Maeda N."/>
            <person name="Oyama R."/>
            <person name="Ravasi T."/>
            <person name="Lenhard B."/>
            <person name="Wells C."/>
            <person name="Kodzius R."/>
            <person name="Shimokawa K."/>
            <person name="Bajic V.B."/>
            <person name="Brenner S.E."/>
            <person name="Batalov S."/>
            <person name="Forrest A.R."/>
            <person name="Zavolan M."/>
            <person name="Davis M.J."/>
            <person name="Wilming L.G."/>
            <person name="Aidinis V."/>
            <person name="Allen J.E."/>
            <person name="Ambesi-Impiombato A."/>
            <person name="Apweiler R."/>
            <person name="Aturaliya R.N."/>
            <person name="Bailey T.L."/>
            <person name="Bansal M."/>
            <person name="Baxter L."/>
            <person name="Beisel K.W."/>
            <person name="Bersano T."/>
            <person name="Bono H."/>
            <person name="Chalk A.M."/>
            <person name="Chiu K.P."/>
            <person name="Choudhary V."/>
            <person name="Christoffels A."/>
            <person name="Clutterbuck D.R."/>
            <person name="Crowe M.L."/>
            <person name="Dalla E."/>
            <person name="Dalrymple B.P."/>
            <person name="de Bono B."/>
            <person name="Della Gatta G."/>
            <person name="di Bernardo D."/>
            <person name="Down T."/>
            <person name="Engstrom P."/>
            <person name="Fagiolini M."/>
            <person name="Faulkner G."/>
            <person name="Fletcher C.F."/>
            <person name="Fukushima T."/>
            <person name="Furuno M."/>
            <person name="Futaki S."/>
            <person name="Gariboldi M."/>
            <person name="Georgii-Hemming P."/>
            <person name="Gingeras T.R."/>
            <person name="Gojobori T."/>
            <person name="Green R.E."/>
            <person name="Gustincich S."/>
            <person name="Harbers M."/>
            <person name="Hayashi Y."/>
            <person name="Hensch T.K."/>
            <person name="Hirokawa N."/>
            <person name="Hill D."/>
            <person name="Huminiecki L."/>
            <person name="Iacono M."/>
            <person name="Ikeo K."/>
            <person name="Iwama A."/>
            <person name="Ishikawa T."/>
            <person name="Jakt M."/>
            <person name="Kanapin A."/>
            <person name="Katoh M."/>
            <person name="Kawasawa Y."/>
            <person name="Kelso J."/>
            <person name="Kitamura H."/>
            <person name="Kitano H."/>
            <person name="Kollias G."/>
            <person name="Krishnan S.P."/>
            <person name="Kruger A."/>
            <person name="Kummerfeld S.K."/>
            <person name="Kurochkin I.V."/>
            <person name="Lareau L.F."/>
            <person name="Lazarevic D."/>
            <person name="Lipovich L."/>
            <person name="Liu J."/>
            <person name="Liuni S."/>
            <person name="McWilliam S."/>
            <person name="Madan Babu M."/>
            <person name="Madera M."/>
            <person name="Marchionni L."/>
            <person name="Matsuda H."/>
            <person name="Matsuzawa S."/>
            <person name="Miki H."/>
            <person name="Mignone F."/>
            <person name="Miyake S."/>
            <person name="Morris K."/>
            <person name="Mottagui-Tabar S."/>
            <person name="Mulder N."/>
            <person name="Nakano N."/>
            <person name="Nakauchi H."/>
            <person name="Ng P."/>
            <person name="Nilsson R."/>
            <person name="Nishiguchi S."/>
            <person name="Nishikawa S."/>
            <person name="Nori F."/>
            <person name="Ohara O."/>
            <person name="Okazaki Y."/>
            <person name="Orlando V."/>
            <person name="Pang K.C."/>
            <person name="Pavan W.J."/>
            <person name="Pavesi G."/>
            <person name="Pesole G."/>
            <person name="Petrovsky N."/>
            <person name="Piazza S."/>
            <person name="Reed J."/>
            <person name="Reid J.F."/>
            <person name="Ring B.Z."/>
            <person name="Ringwald M."/>
            <person name="Rost B."/>
            <person name="Ruan Y."/>
            <person name="Salzberg S.L."/>
            <person name="Sandelin A."/>
            <person name="Schneider C."/>
            <person name="Schoenbach C."/>
            <person name="Sekiguchi K."/>
            <person name="Semple C.A."/>
            <person name="Seno S."/>
            <person name="Sessa L."/>
            <person name="Sheng Y."/>
            <person name="Shibata Y."/>
            <person name="Shimada H."/>
            <person name="Shimada K."/>
            <person name="Silva D."/>
            <person name="Sinclair B."/>
            <person name="Sperling S."/>
            <person name="Stupka E."/>
            <person name="Sugiura K."/>
            <person name="Sultana R."/>
            <person name="Takenaka Y."/>
            <person name="Taki K."/>
            <person name="Tammoja K."/>
            <person name="Tan S.L."/>
            <person name="Tang S."/>
            <person name="Taylor M.S."/>
            <person name="Tegner J."/>
            <person name="Teichmann S.A."/>
            <person name="Ueda H.R."/>
            <person name="van Nimwegen E."/>
            <person name="Verardo R."/>
            <person name="Wei C.L."/>
            <person name="Yagi K."/>
            <person name="Yamanishi H."/>
            <person name="Zabarovsky E."/>
            <person name="Zhu S."/>
            <person name="Zimmer A."/>
            <person name="Hide W."/>
            <person name="Bult C."/>
            <person name="Grimmond S.M."/>
            <person name="Teasdale R.D."/>
            <person name="Liu E.T."/>
            <person name="Brusic V."/>
            <person name="Quackenbush J."/>
            <person name="Wahlestedt C."/>
            <person name="Mattick J.S."/>
            <person name="Hume D.A."/>
            <person name="Kai C."/>
            <person name="Sasaki D."/>
            <person name="Tomaru Y."/>
            <person name="Fukuda S."/>
            <person name="Kanamori-Katayama M."/>
            <person name="Suzuki M."/>
            <person name="Aoki J."/>
            <person name="Arakawa T."/>
            <person name="Iida J."/>
            <person name="Imamura K."/>
            <person name="Itoh M."/>
            <person name="Kato T."/>
            <person name="Kawaji H."/>
            <person name="Kawagashira N."/>
            <person name="Kawashima T."/>
            <person name="Kojima M."/>
            <person name="Kondo S."/>
            <person name="Konno H."/>
            <person name="Nakano K."/>
            <person name="Ninomiya N."/>
            <person name="Nishio T."/>
            <person name="Okada M."/>
            <person name="Plessy C."/>
            <person name="Shibata K."/>
            <person name="Shiraki T."/>
            <person name="Suzuki S."/>
            <person name="Tagami M."/>
            <person name="Waki K."/>
            <person name="Watahiki A."/>
            <person name="Okamura-Oho Y."/>
            <person name="Suzuki H."/>
            <person name="Kawai J."/>
            <person name="Hayashizaki Y."/>
        </authorList>
    </citation>
    <scope>NUCLEOTIDE SEQUENCE [LARGE SCALE MRNA]</scope>
    <source>
        <strain>C57BL/6J</strain>
        <tissue>Hippocampus</tissue>
        <tissue>Pituitary</tissue>
        <tissue>Placenta</tissue>
    </source>
</reference>
<reference key="3">
    <citation type="journal article" date="2009" name="PLoS Biol.">
        <title>Lineage-specific biology revealed by a finished genome assembly of the mouse.</title>
        <authorList>
            <person name="Church D.M."/>
            <person name="Goodstadt L."/>
            <person name="Hillier L.W."/>
            <person name="Zody M.C."/>
            <person name="Goldstein S."/>
            <person name="She X."/>
            <person name="Bult C.J."/>
            <person name="Agarwala R."/>
            <person name="Cherry J.L."/>
            <person name="DiCuccio M."/>
            <person name="Hlavina W."/>
            <person name="Kapustin Y."/>
            <person name="Meric P."/>
            <person name="Maglott D."/>
            <person name="Birtle Z."/>
            <person name="Marques A.C."/>
            <person name="Graves T."/>
            <person name="Zhou S."/>
            <person name="Teague B."/>
            <person name="Potamousis K."/>
            <person name="Churas C."/>
            <person name="Place M."/>
            <person name="Herschleb J."/>
            <person name="Runnheim R."/>
            <person name="Forrest D."/>
            <person name="Amos-Landgraf J."/>
            <person name="Schwartz D.C."/>
            <person name="Cheng Z."/>
            <person name="Lindblad-Toh K."/>
            <person name="Eichler E.E."/>
            <person name="Ponting C.P."/>
        </authorList>
    </citation>
    <scope>NUCLEOTIDE SEQUENCE [LARGE SCALE GENOMIC DNA]</scope>
    <source>
        <strain>C57BL/6J</strain>
    </source>
</reference>
<reference key="4">
    <citation type="journal article" date="2004" name="Genome Res.">
        <title>The status, quality, and expansion of the NIH full-length cDNA project: the Mammalian Gene Collection (MGC).</title>
        <authorList>
            <consortium name="The MGC Project Team"/>
        </authorList>
    </citation>
    <scope>NUCLEOTIDE SEQUENCE [LARGE SCALE MRNA]</scope>
    <source>
        <strain>Czech II</strain>
        <strain>FVB/N</strain>
        <tissue>Colon</tissue>
        <tissue>Mammary tumor</tissue>
    </source>
</reference>
<reference key="5">
    <citation type="journal article" date="2004" name="J. Exp. Med.">
        <title>Phosphorylation of histone H2B at DNA double-strand breaks.</title>
        <authorList>
            <person name="Fernandez-Capetillo O."/>
            <person name="Allis C.D."/>
            <person name="Nussenzweig A."/>
        </authorList>
    </citation>
    <scope>PHOSPHORYLATION AT SER-15</scope>
</reference>
<reference key="6">
    <citation type="journal article" date="2005" name="Immunity">
        <title>Histone modifications associated with somatic hypermutation.</title>
        <authorList>
            <person name="Odegard V.H."/>
            <person name="Kim S.T."/>
            <person name="Anderson S.M."/>
            <person name="Shlomchik M.J."/>
            <person name="Schatz D.G."/>
        </authorList>
    </citation>
    <scope>PHOSPHORYLATION AT SER-15</scope>
</reference>
<reference key="7">
    <citation type="journal article" date="2010" name="Science">
        <title>Signaling kinase AMPK activates stress-promoted transcription via histone H2B phosphorylation.</title>
        <authorList>
            <person name="Bungard D."/>
            <person name="Fuerth B.J."/>
            <person name="Zeng P.Y."/>
            <person name="Faubert B."/>
            <person name="Maas N.L."/>
            <person name="Viollet B."/>
            <person name="Carling D."/>
            <person name="Thompson C.B."/>
            <person name="Jones R.G."/>
            <person name="Berger S.L."/>
        </authorList>
    </citation>
    <scope>PHOSPHORYLATION AT SER-37</scope>
</reference>
<reference key="8">
    <citation type="journal article" date="2011" name="Cell">
        <title>Identification of 67 histone marks and histone lysine crotonylation as a new type of histone modification.</title>
        <authorList>
            <person name="Tan M."/>
            <person name="Luo H."/>
            <person name="Lee S."/>
            <person name="Jin F."/>
            <person name="Yang J.S."/>
            <person name="Montellier E."/>
            <person name="Buchou T."/>
            <person name="Cheng Z."/>
            <person name="Rousseaux S."/>
            <person name="Rajagopal N."/>
            <person name="Lu Z."/>
            <person name="Ye Z."/>
            <person name="Zhu Q."/>
            <person name="Wysocka J."/>
            <person name="Ye Y."/>
            <person name="Khochbin S."/>
            <person name="Ren B."/>
            <person name="Zhao Y."/>
        </authorList>
    </citation>
    <scope>CROTONYLATION AT LYS-6; LYS-12; LYS-13; LYS-16; LYS-17; LYS-21; LYS-24 AND LYS-35</scope>
</reference>
<reference key="9">
    <citation type="journal article" date="2012" name="Mol. Cell. Proteomics">
        <title>Lysine succinylation and lysine malonylation in histones.</title>
        <authorList>
            <person name="Xie Z."/>
            <person name="Dai J."/>
            <person name="Dai L."/>
            <person name="Tan M."/>
            <person name="Cheng Z."/>
            <person name="Wu Y."/>
            <person name="Boeke J.D."/>
            <person name="Zhao Y."/>
        </authorList>
    </citation>
    <scope>SUCCINYLATION AT LYS-121</scope>
</reference>
<reference key="10">
    <citation type="journal article" date="2014" name="Nat. Chem. Biol.">
        <title>Lysine 2-hydroxyisobutyrylation is a widely distributed active histone mark.</title>
        <authorList>
            <person name="Dai L."/>
            <person name="Peng C."/>
            <person name="Montellier E."/>
            <person name="Lu Z."/>
            <person name="Chen Y."/>
            <person name="Ishii H."/>
            <person name="Debernardi A."/>
            <person name="Buchou T."/>
            <person name="Rousseaux S."/>
            <person name="Jin F."/>
            <person name="Sabari B.R."/>
            <person name="Deng Z."/>
            <person name="Allis C.D."/>
            <person name="Ren B."/>
            <person name="Khochbin S."/>
            <person name="Zhao Y."/>
        </authorList>
    </citation>
    <scope>HYDROXYBUTYRYLATION AT LYS-6; LYS-13; LYS-21; LYS-24; LYS-25; LYS-35; LYS-44; LYS-47; LYS-58; LYS-86; LYS-109; LYS-117 AND LYS-121</scope>
</reference>
<reference key="11">
    <citation type="journal article" date="2016" name="Mol. Cell">
        <title>Metabolic regulation of gene expression by histone lysine beta-hydroxybutyrylation.</title>
        <authorList>
            <person name="Xie Z."/>
            <person name="Zhang D."/>
            <person name="Chung D."/>
            <person name="Tang Z."/>
            <person name="Huang H."/>
            <person name="Dai L."/>
            <person name="Qi S."/>
            <person name="Li J."/>
            <person name="Colak G."/>
            <person name="Chen Y."/>
            <person name="Xia C."/>
            <person name="Peng C."/>
            <person name="Ruan H."/>
            <person name="Kirkey M."/>
            <person name="Wang D."/>
            <person name="Jensen L.M."/>
            <person name="Kwon O.K."/>
            <person name="Lee S."/>
            <person name="Pletcher S.D."/>
            <person name="Tan M."/>
            <person name="Lombard D.B."/>
            <person name="White K.P."/>
            <person name="Zhao H."/>
            <person name="Li J."/>
            <person name="Roeder R.G."/>
            <person name="Yang X."/>
            <person name="Zhao Y."/>
        </authorList>
    </citation>
    <scope>HYDROXYBUTYRYLATION AT LYS-6; LYS-12; LYS-21; LYS-35; LYS-109 AND LYS-117</scope>
</reference>
<reference key="12">
    <citation type="journal article" date="2019" name="Nature">
        <title>Metabolic regulation of gene expression by histone lactylation.</title>
        <authorList>
            <person name="Zhang D."/>
            <person name="Tang Z."/>
            <person name="Huang H."/>
            <person name="Zhou G."/>
            <person name="Cui C."/>
            <person name="Weng Y."/>
            <person name="Liu W."/>
            <person name="Kim S."/>
            <person name="Lee S."/>
            <person name="Perez-Neut M."/>
            <person name="Ding J."/>
            <person name="Czyz D."/>
            <person name="Hu R."/>
            <person name="Ye Z."/>
            <person name="He M."/>
            <person name="Zheng Y.G."/>
            <person name="Shuman H.A."/>
            <person name="Dai L."/>
            <person name="Ren B."/>
            <person name="Roeder R.G."/>
            <person name="Becker L."/>
            <person name="Zhao Y."/>
        </authorList>
    </citation>
    <scope>LACTYLATION AT LYS-6; LYS-12; LYS-16; LYS-17; LYS-21; LYS-86; LYS-109 AND LYS-117</scope>
</reference>
<reference key="13">
    <citation type="journal article" date="2020" name="Mol. Cell">
        <title>Functional interplay between histone H2B ADP-ribosylation and phosphorylation controls adipogenesis.</title>
        <authorList>
            <person name="Huang D."/>
            <person name="Camacho C.V."/>
            <person name="Setlem R."/>
            <person name="Ryu K.W."/>
            <person name="Parameswaran B."/>
            <person name="Gupta R.K."/>
            <person name="Kraus W.L."/>
        </authorList>
    </citation>
    <scope>ADP-RIBOSYLATION AT GLU-36</scope>
    <scope>PHOSPHORYLATION AT SER-37</scope>
</reference>